<accession>Q3J5M6</accession>
<feature type="chain" id="PRO_0000232082" description="Phenylalanine--tRNA ligase beta subunit">
    <location>
        <begin position="1"/>
        <end position="805"/>
    </location>
</feature>
<feature type="domain" description="tRNA-binding" evidence="1">
    <location>
        <begin position="39"/>
        <end position="155"/>
    </location>
</feature>
<feature type="domain" description="B5" evidence="1">
    <location>
        <begin position="408"/>
        <end position="479"/>
    </location>
</feature>
<feature type="domain" description="FDX-ACB" evidence="1">
    <location>
        <begin position="707"/>
        <end position="804"/>
    </location>
</feature>
<feature type="binding site" evidence="1">
    <location>
        <position position="457"/>
    </location>
    <ligand>
        <name>Mg(2+)</name>
        <dbReference type="ChEBI" id="CHEBI:18420"/>
        <note>shared with alpha subunit</note>
    </ligand>
</feature>
<feature type="binding site" evidence="1">
    <location>
        <position position="463"/>
    </location>
    <ligand>
        <name>Mg(2+)</name>
        <dbReference type="ChEBI" id="CHEBI:18420"/>
        <note>shared with alpha subunit</note>
    </ligand>
</feature>
<feature type="binding site" evidence="1">
    <location>
        <position position="466"/>
    </location>
    <ligand>
        <name>Mg(2+)</name>
        <dbReference type="ChEBI" id="CHEBI:18420"/>
        <note>shared with alpha subunit</note>
    </ligand>
</feature>
<feature type="binding site" evidence="1">
    <location>
        <position position="467"/>
    </location>
    <ligand>
        <name>Mg(2+)</name>
        <dbReference type="ChEBI" id="CHEBI:18420"/>
        <note>shared with alpha subunit</note>
    </ligand>
</feature>
<name>SYFB_CERS4</name>
<proteinExistence type="inferred from homology"/>
<comment type="catalytic activity">
    <reaction evidence="1">
        <text>tRNA(Phe) + L-phenylalanine + ATP = L-phenylalanyl-tRNA(Phe) + AMP + diphosphate + H(+)</text>
        <dbReference type="Rhea" id="RHEA:19413"/>
        <dbReference type="Rhea" id="RHEA-COMP:9668"/>
        <dbReference type="Rhea" id="RHEA-COMP:9699"/>
        <dbReference type="ChEBI" id="CHEBI:15378"/>
        <dbReference type="ChEBI" id="CHEBI:30616"/>
        <dbReference type="ChEBI" id="CHEBI:33019"/>
        <dbReference type="ChEBI" id="CHEBI:58095"/>
        <dbReference type="ChEBI" id="CHEBI:78442"/>
        <dbReference type="ChEBI" id="CHEBI:78531"/>
        <dbReference type="ChEBI" id="CHEBI:456215"/>
        <dbReference type="EC" id="6.1.1.20"/>
    </reaction>
</comment>
<comment type="cofactor">
    <cofactor evidence="1">
        <name>Mg(2+)</name>
        <dbReference type="ChEBI" id="CHEBI:18420"/>
    </cofactor>
    <text evidence="1">Binds 2 magnesium ions per tetramer.</text>
</comment>
<comment type="subunit">
    <text evidence="1">Tetramer of two alpha and two beta subunits.</text>
</comment>
<comment type="subcellular location">
    <subcellularLocation>
        <location evidence="1">Cytoplasm</location>
    </subcellularLocation>
</comment>
<comment type="similarity">
    <text evidence="1">Belongs to the phenylalanyl-tRNA synthetase beta subunit family. Type 1 subfamily.</text>
</comment>
<sequence>MKFTLSWLKDHLETEAPLDEIVTALTDLGHEVEGVEDPVKVLGAFRICRVIEAQPHPNADRLRLCRVATWPNGPDAPSEEVQVVCGAPNARTGLVGVFAPVGTHVPGTGVDLKPGVIRGVESNGMLCSERELMLSDDHDGIIDLPEDAPMGMRFIDYKGVNDPTIEVKITPNRPDGLGVRGLARDLAARGLGRLKPLPVEPVPGLFPSPVSVTIEAALKEKGCPLFAGRTIRGVKNGPSPDWLQARLRSVGLRPISALVDITNYFTIGLNRPLHVFDVAKITGGLRIHAAEGGEELLALDGKTYKLRPGQMLISDDAQPESLAGIMGGELSGCTEETTDVFLESAYWDPITIAATGRALKIVSDARYRFERGVDPAFTLPGLELATRMILDLCGGEASEVVMDGAVPDTSRAYRFDPKRVVSLVGMEIPEAEQRTTLEALGFTLEGELAAPPSWRPDVQGEADLVEEIARVASLTKLQGKPLPRAQAGVPKPILTPLQVREQAARRTLAALGYNECVTYSFIDEAAAKLFGGGSEAVRVENPISSEMTHLRPDLLPGLLRAAARNQARGFADMALCEIGPVFAGGEPGEQQLQATGLLVGASAPRDPFGSRRPVDVYDAKADAEAVLAAVGAPAKMQISRKVPGWWHPGRSGAVGLGPNLLATFGEVHPKILREMDVKGPAVAFTILVANVPLPKVKTPTRPALKLSDLQAVERDFAFVVDASVEALTLVNAAQGADKALIESVRVFDQFSGDKAEAQMGAGKKSLALTVRLQPTDRTLTDKDIEAVSAKIVEKVAKATGATLRG</sequence>
<organism>
    <name type="scientific">Cereibacter sphaeroides (strain ATCC 17023 / DSM 158 / JCM 6121 / CCUG 31486 / LMG 2827 / NBRC 12203 / NCIMB 8253 / ATH 2.4.1.)</name>
    <name type="common">Rhodobacter sphaeroides</name>
    <dbReference type="NCBI Taxonomy" id="272943"/>
    <lineage>
        <taxon>Bacteria</taxon>
        <taxon>Pseudomonadati</taxon>
        <taxon>Pseudomonadota</taxon>
        <taxon>Alphaproteobacteria</taxon>
        <taxon>Rhodobacterales</taxon>
        <taxon>Paracoccaceae</taxon>
        <taxon>Cereibacter</taxon>
    </lineage>
</organism>
<dbReference type="EC" id="6.1.1.20" evidence="1"/>
<dbReference type="EMBL" id="CP000143">
    <property type="protein sequence ID" value="ABA77908.1"/>
    <property type="molecule type" value="Genomic_DNA"/>
</dbReference>
<dbReference type="RefSeq" id="WP_011336966.1">
    <property type="nucleotide sequence ID" value="NC_007493.2"/>
</dbReference>
<dbReference type="RefSeq" id="YP_351809.1">
    <property type="nucleotide sequence ID" value="NC_007493.2"/>
</dbReference>
<dbReference type="SMR" id="Q3J5M6"/>
<dbReference type="STRING" id="272943.RSP_1761"/>
<dbReference type="EnsemblBacteria" id="ABA77908">
    <property type="protein sequence ID" value="ABA77908"/>
    <property type="gene ID" value="RSP_1761"/>
</dbReference>
<dbReference type="GeneID" id="3718967"/>
<dbReference type="KEGG" id="rsp:RSP_1761"/>
<dbReference type="PATRIC" id="fig|272943.9.peg.639"/>
<dbReference type="eggNOG" id="COG0072">
    <property type="taxonomic scope" value="Bacteria"/>
</dbReference>
<dbReference type="eggNOG" id="COG0073">
    <property type="taxonomic scope" value="Bacteria"/>
</dbReference>
<dbReference type="OrthoDB" id="9805455at2"/>
<dbReference type="PhylomeDB" id="Q3J5M6"/>
<dbReference type="Proteomes" id="UP000002703">
    <property type="component" value="Chromosome 1"/>
</dbReference>
<dbReference type="GO" id="GO:0009328">
    <property type="term" value="C:phenylalanine-tRNA ligase complex"/>
    <property type="evidence" value="ECO:0007669"/>
    <property type="project" value="TreeGrafter"/>
</dbReference>
<dbReference type="GO" id="GO:0005524">
    <property type="term" value="F:ATP binding"/>
    <property type="evidence" value="ECO:0007669"/>
    <property type="project" value="UniProtKB-UniRule"/>
</dbReference>
<dbReference type="GO" id="GO:0000287">
    <property type="term" value="F:magnesium ion binding"/>
    <property type="evidence" value="ECO:0007669"/>
    <property type="project" value="UniProtKB-UniRule"/>
</dbReference>
<dbReference type="GO" id="GO:0004826">
    <property type="term" value="F:phenylalanine-tRNA ligase activity"/>
    <property type="evidence" value="ECO:0007669"/>
    <property type="project" value="UniProtKB-UniRule"/>
</dbReference>
<dbReference type="GO" id="GO:0000049">
    <property type="term" value="F:tRNA binding"/>
    <property type="evidence" value="ECO:0007669"/>
    <property type="project" value="UniProtKB-KW"/>
</dbReference>
<dbReference type="GO" id="GO:0006432">
    <property type="term" value="P:phenylalanyl-tRNA aminoacylation"/>
    <property type="evidence" value="ECO:0007669"/>
    <property type="project" value="UniProtKB-UniRule"/>
</dbReference>
<dbReference type="CDD" id="cd00769">
    <property type="entry name" value="PheRS_beta_core"/>
    <property type="match status" value="1"/>
</dbReference>
<dbReference type="CDD" id="cd02796">
    <property type="entry name" value="tRNA_bind_bactPheRS"/>
    <property type="match status" value="1"/>
</dbReference>
<dbReference type="Gene3D" id="3.30.56.10">
    <property type="match status" value="2"/>
</dbReference>
<dbReference type="Gene3D" id="3.30.930.10">
    <property type="entry name" value="Bira Bifunctional Protein, Domain 2"/>
    <property type="match status" value="1"/>
</dbReference>
<dbReference type="Gene3D" id="3.30.70.380">
    <property type="entry name" value="Ferrodoxin-fold anticodon-binding domain"/>
    <property type="match status" value="1"/>
</dbReference>
<dbReference type="Gene3D" id="2.40.50.140">
    <property type="entry name" value="Nucleic acid-binding proteins"/>
    <property type="match status" value="1"/>
</dbReference>
<dbReference type="Gene3D" id="3.50.40.10">
    <property type="entry name" value="Phenylalanyl-trna Synthetase, Chain B, domain 3"/>
    <property type="match status" value="1"/>
</dbReference>
<dbReference type="HAMAP" id="MF_00283">
    <property type="entry name" value="Phe_tRNA_synth_beta1"/>
    <property type="match status" value="1"/>
</dbReference>
<dbReference type="InterPro" id="IPR045864">
    <property type="entry name" value="aa-tRNA-synth_II/BPL/LPL"/>
</dbReference>
<dbReference type="InterPro" id="IPR005146">
    <property type="entry name" value="B3/B4_tRNA-bd"/>
</dbReference>
<dbReference type="InterPro" id="IPR009061">
    <property type="entry name" value="DNA-bd_dom_put_sf"/>
</dbReference>
<dbReference type="InterPro" id="IPR005121">
    <property type="entry name" value="Fdx_antiC-bd"/>
</dbReference>
<dbReference type="InterPro" id="IPR036690">
    <property type="entry name" value="Fdx_antiC-bd_sf"/>
</dbReference>
<dbReference type="InterPro" id="IPR012340">
    <property type="entry name" value="NA-bd_OB-fold"/>
</dbReference>
<dbReference type="InterPro" id="IPR045060">
    <property type="entry name" value="Phe-tRNA-ligase_IIc_bsu"/>
</dbReference>
<dbReference type="InterPro" id="IPR004532">
    <property type="entry name" value="Phe-tRNA-ligase_IIc_bsu_bact"/>
</dbReference>
<dbReference type="InterPro" id="IPR020825">
    <property type="entry name" value="Phe-tRNA_synthase-like_B3/B4"/>
</dbReference>
<dbReference type="InterPro" id="IPR041616">
    <property type="entry name" value="PheRS_beta_core"/>
</dbReference>
<dbReference type="InterPro" id="IPR002547">
    <property type="entry name" value="tRNA-bd_dom"/>
</dbReference>
<dbReference type="InterPro" id="IPR033714">
    <property type="entry name" value="tRNA_bind_bactPheRS"/>
</dbReference>
<dbReference type="InterPro" id="IPR005147">
    <property type="entry name" value="tRNA_synthase_B5-dom"/>
</dbReference>
<dbReference type="NCBIfam" id="TIGR00472">
    <property type="entry name" value="pheT_bact"/>
    <property type="match status" value="1"/>
</dbReference>
<dbReference type="PANTHER" id="PTHR10947:SF0">
    <property type="entry name" value="PHENYLALANINE--TRNA LIGASE BETA SUBUNIT"/>
    <property type="match status" value="1"/>
</dbReference>
<dbReference type="PANTHER" id="PTHR10947">
    <property type="entry name" value="PHENYLALANYL-TRNA SYNTHETASE BETA CHAIN AND LEUCINE-RICH REPEAT-CONTAINING PROTEIN 47"/>
    <property type="match status" value="1"/>
</dbReference>
<dbReference type="Pfam" id="PF03483">
    <property type="entry name" value="B3_4"/>
    <property type="match status" value="1"/>
</dbReference>
<dbReference type="Pfam" id="PF03484">
    <property type="entry name" value="B5"/>
    <property type="match status" value="1"/>
</dbReference>
<dbReference type="Pfam" id="PF03147">
    <property type="entry name" value="FDX-ACB"/>
    <property type="match status" value="1"/>
</dbReference>
<dbReference type="Pfam" id="PF01588">
    <property type="entry name" value="tRNA_bind"/>
    <property type="match status" value="1"/>
</dbReference>
<dbReference type="Pfam" id="PF17759">
    <property type="entry name" value="tRNA_synthFbeta"/>
    <property type="match status" value="1"/>
</dbReference>
<dbReference type="SMART" id="SM00873">
    <property type="entry name" value="B3_4"/>
    <property type="match status" value="1"/>
</dbReference>
<dbReference type="SMART" id="SM00874">
    <property type="entry name" value="B5"/>
    <property type="match status" value="1"/>
</dbReference>
<dbReference type="SMART" id="SM00896">
    <property type="entry name" value="FDX-ACB"/>
    <property type="match status" value="1"/>
</dbReference>
<dbReference type="SUPFAM" id="SSF54991">
    <property type="entry name" value="Anticodon-binding domain of PheRS"/>
    <property type="match status" value="1"/>
</dbReference>
<dbReference type="SUPFAM" id="SSF55681">
    <property type="entry name" value="Class II aaRS and biotin synthetases"/>
    <property type="match status" value="1"/>
</dbReference>
<dbReference type="SUPFAM" id="SSF50249">
    <property type="entry name" value="Nucleic acid-binding proteins"/>
    <property type="match status" value="1"/>
</dbReference>
<dbReference type="SUPFAM" id="SSF56037">
    <property type="entry name" value="PheT/TilS domain"/>
    <property type="match status" value="1"/>
</dbReference>
<dbReference type="SUPFAM" id="SSF46955">
    <property type="entry name" value="Putative DNA-binding domain"/>
    <property type="match status" value="1"/>
</dbReference>
<dbReference type="PROSITE" id="PS51483">
    <property type="entry name" value="B5"/>
    <property type="match status" value="1"/>
</dbReference>
<dbReference type="PROSITE" id="PS51447">
    <property type="entry name" value="FDX_ACB"/>
    <property type="match status" value="1"/>
</dbReference>
<dbReference type="PROSITE" id="PS50886">
    <property type="entry name" value="TRBD"/>
    <property type="match status" value="1"/>
</dbReference>
<keyword id="KW-0030">Aminoacyl-tRNA synthetase</keyword>
<keyword id="KW-0067">ATP-binding</keyword>
<keyword id="KW-0963">Cytoplasm</keyword>
<keyword id="KW-0436">Ligase</keyword>
<keyword id="KW-0460">Magnesium</keyword>
<keyword id="KW-0479">Metal-binding</keyword>
<keyword id="KW-0547">Nucleotide-binding</keyword>
<keyword id="KW-0648">Protein biosynthesis</keyword>
<keyword id="KW-1185">Reference proteome</keyword>
<keyword id="KW-0694">RNA-binding</keyword>
<keyword id="KW-0820">tRNA-binding</keyword>
<reference key="1">
    <citation type="submission" date="2005-09" db="EMBL/GenBank/DDBJ databases">
        <title>Complete sequence of chromosome 1 of Rhodobacter sphaeroides 2.4.1.</title>
        <authorList>
            <person name="Copeland A."/>
            <person name="Lucas S."/>
            <person name="Lapidus A."/>
            <person name="Barry K."/>
            <person name="Detter J.C."/>
            <person name="Glavina T."/>
            <person name="Hammon N."/>
            <person name="Israni S."/>
            <person name="Pitluck S."/>
            <person name="Richardson P."/>
            <person name="Mackenzie C."/>
            <person name="Choudhary M."/>
            <person name="Larimer F."/>
            <person name="Hauser L.J."/>
            <person name="Land M."/>
            <person name="Donohue T.J."/>
            <person name="Kaplan S."/>
        </authorList>
    </citation>
    <scope>NUCLEOTIDE SEQUENCE [LARGE SCALE GENOMIC DNA]</scope>
    <source>
        <strain>ATCC 17023 / DSM 158 / JCM 6121 / CCUG 31486 / LMG 2827 / NBRC 12203 / NCIMB 8253 / ATH 2.4.1.</strain>
    </source>
</reference>
<protein>
    <recommendedName>
        <fullName evidence="1">Phenylalanine--tRNA ligase beta subunit</fullName>
        <ecNumber evidence="1">6.1.1.20</ecNumber>
    </recommendedName>
    <alternativeName>
        <fullName evidence="1">Phenylalanyl-tRNA synthetase beta subunit</fullName>
        <shortName evidence="1">PheRS</shortName>
    </alternativeName>
</protein>
<evidence type="ECO:0000255" key="1">
    <source>
        <dbReference type="HAMAP-Rule" id="MF_00283"/>
    </source>
</evidence>
<gene>
    <name evidence="1" type="primary">pheT</name>
    <name type="ordered locus">RHOS4_03400</name>
    <name type="ORF">RSP_1761</name>
</gene>